<reference key="1">
    <citation type="journal article" date="2005" name="Genome Res.">
        <title>Sequence, annotation, and analysis of synteny between rice chromosome 3 and diverged grass species.</title>
        <authorList>
            <consortium name="The rice chromosome 3 sequencing consortium"/>
            <person name="Buell C.R."/>
            <person name="Yuan Q."/>
            <person name="Ouyang S."/>
            <person name="Liu J."/>
            <person name="Zhu W."/>
            <person name="Wang A."/>
            <person name="Maiti R."/>
            <person name="Haas B."/>
            <person name="Wortman J."/>
            <person name="Pertea M."/>
            <person name="Jones K.M."/>
            <person name="Kim M."/>
            <person name="Overton L."/>
            <person name="Tsitrin T."/>
            <person name="Fadrosh D."/>
            <person name="Bera J."/>
            <person name="Weaver B."/>
            <person name="Jin S."/>
            <person name="Johri S."/>
            <person name="Reardon M."/>
            <person name="Webb K."/>
            <person name="Hill J."/>
            <person name="Moffat K."/>
            <person name="Tallon L."/>
            <person name="Van Aken S."/>
            <person name="Lewis M."/>
            <person name="Utterback T."/>
            <person name="Feldblyum T."/>
            <person name="Zismann V."/>
            <person name="Iobst S."/>
            <person name="Hsiao J."/>
            <person name="de Vazeille A.R."/>
            <person name="Salzberg S.L."/>
            <person name="White O."/>
            <person name="Fraser C.M."/>
            <person name="Yu Y."/>
            <person name="Kim H."/>
            <person name="Rambo T."/>
            <person name="Currie J."/>
            <person name="Collura K."/>
            <person name="Kernodle-Thompson S."/>
            <person name="Wei F."/>
            <person name="Kudrna K."/>
            <person name="Ammiraju J.S.S."/>
            <person name="Luo M."/>
            <person name="Goicoechea J.L."/>
            <person name="Wing R.A."/>
            <person name="Henry D."/>
            <person name="Oates R."/>
            <person name="Palmer M."/>
            <person name="Pries G."/>
            <person name="Saski C."/>
            <person name="Simmons J."/>
            <person name="Soderlund C."/>
            <person name="Nelson W."/>
            <person name="de la Bastide M."/>
            <person name="Spiegel L."/>
            <person name="Nascimento L."/>
            <person name="Huang E."/>
            <person name="Preston R."/>
            <person name="Zutavern T."/>
            <person name="Palmer L."/>
            <person name="O'Shaughnessy A."/>
            <person name="Dike S."/>
            <person name="McCombie W.R."/>
            <person name="Minx P."/>
            <person name="Cordum H."/>
            <person name="Wilson R."/>
            <person name="Jin W."/>
            <person name="Lee H.R."/>
            <person name="Jiang J."/>
            <person name="Jackson S."/>
        </authorList>
    </citation>
    <scope>NUCLEOTIDE SEQUENCE [LARGE SCALE GENOMIC DNA]</scope>
    <source>
        <strain>cv. Nipponbare</strain>
    </source>
</reference>
<reference key="2">
    <citation type="journal article" date="2005" name="Nature">
        <title>The map-based sequence of the rice genome.</title>
        <authorList>
            <consortium name="International rice genome sequencing project (IRGSP)"/>
        </authorList>
    </citation>
    <scope>NUCLEOTIDE SEQUENCE [LARGE SCALE GENOMIC DNA]</scope>
    <source>
        <strain>cv. Nipponbare</strain>
    </source>
</reference>
<reference key="3">
    <citation type="journal article" date="2008" name="Nucleic Acids Res.">
        <title>The rice annotation project database (RAP-DB): 2008 update.</title>
        <authorList>
            <consortium name="The rice annotation project (RAP)"/>
        </authorList>
    </citation>
    <scope>GENOME REANNOTATION</scope>
    <source>
        <strain>cv. Nipponbare</strain>
    </source>
</reference>
<reference key="4">
    <citation type="journal article" date="2013" name="Rice">
        <title>Improvement of the Oryza sativa Nipponbare reference genome using next generation sequence and optical map data.</title>
        <authorList>
            <person name="Kawahara Y."/>
            <person name="de la Bastide M."/>
            <person name="Hamilton J.P."/>
            <person name="Kanamori H."/>
            <person name="McCombie W.R."/>
            <person name="Ouyang S."/>
            <person name="Schwartz D.C."/>
            <person name="Tanaka T."/>
            <person name="Wu J."/>
            <person name="Zhou S."/>
            <person name="Childs K.L."/>
            <person name="Davidson R.M."/>
            <person name="Lin H."/>
            <person name="Quesada-Ocampo L."/>
            <person name="Vaillancourt B."/>
            <person name="Sakai H."/>
            <person name="Lee S.S."/>
            <person name="Kim J."/>
            <person name="Numa H."/>
            <person name="Itoh T."/>
            <person name="Buell C.R."/>
            <person name="Matsumoto T."/>
        </authorList>
    </citation>
    <scope>GENOME REANNOTATION</scope>
    <source>
        <strain>cv. Nipponbare</strain>
    </source>
</reference>
<reference key="5">
    <citation type="journal article" date="2003" name="Science">
        <title>Collection, mapping, and annotation of over 28,000 cDNA clones from japonica rice.</title>
        <authorList>
            <consortium name="The rice full-length cDNA consortium"/>
        </authorList>
    </citation>
    <scope>NUCLEOTIDE SEQUENCE [LARGE SCALE MRNA]</scope>
    <source>
        <strain>cv. Nipponbare</strain>
    </source>
</reference>
<reference key="6">
    <citation type="journal article" date="2005" name="J. Biol. Chem.">
        <title>Active site residues and amino acid specificity of the ubiquitin carrier protein-binding RING-H2 finger domain.</title>
        <authorList>
            <person name="Katoh S."/>
            <person name="Tsunoda Y."/>
            <person name="Murata K."/>
            <person name="Minami E."/>
            <person name="Katoh E."/>
        </authorList>
    </citation>
    <scope>FUNCTION</scope>
</reference>
<dbReference type="EC" id="2.3.2.27" evidence="1"/>
<dbReference type="EMBL" id="AC121489">
    <property type="protein sequence ID" value="AAN64141.1"/>
    <property type="molecule type" value="Genomic_DNA"/>
</dbReference>
<dbReference type="EMBL" id="DP000009">
    <property type="protein sequence ID" value="ABF94379.1"/>
    <property type="molecule type" value="Genomic_DNA"/>
</dbReference>
<dbReference type="EMBL" id="AP008209">
    <property type="protein sequence ID" value="BAF11130.1"/>
    <property type="molecule type" value="Genomic_DNA"/>
</dbReference>
<dbReference type="EMBL" id="AP014959">
    <property type="protein sequence ID" value="BAS82696.1"/>
    <property type="molecule type" value="Genomic_DNA"/>
</dbReference>
<dbReference type="EMBL" id="AK058578">
    <property type="protein sequence ID" value="BAG86741.1"/>
    <property type="molecule type" value="mRNA"/>
</dbReference>
<dbReference type="RefSeq" id="XP_015627803.1">
    <property type="nucleotide sequence ID" value="XM_015772317.1"/>
</dbReference>
<dbReference type="SMR" id="Q8H7N9"/>
<dbReference type="FunCoup" id="Q8H7N9">
    <property type="interactions" value="18"/>
</dbReference>
<dbReference type="STRING" id="39947.Q8H7N9"/>
<dbReference type="PaxDb" id="39947-Q8H7N9"/>
<dbReference type="EnsemblPlants" id="Os03t0188200-01">
    <property type="protein sequence ID" value="Os03t0188200-01"/>
    <property type="gene ID" value="Os03g0188200"/>
</dbReference>
<dbReference type="Gramene" id="Os03t0188200-01">
    <property type="protein sequence ID" value="Os03t0188200-01"/>
    <property type="gene ID" value="Os03g0188200"/>
</dbReference>
<dbReference type="KEGG" id="dosa:Os03g0188200"/>
<dbReference type="eggNOG" id="KOG0800">
    <property type="taxonomic scope" value="Eukaryota"/>
</dbReference>
<dbReference type="HOGENOM" id="CLU_728383_0_0_1"/>
<dbReference type="InParanoid" id="Q8H7N9"/>
<dbReference type="OMA" id="ARPHEFH"/>
<dbReference type="OrthoDB" id="8062037at2759"/>
<dbReference type="UniPathway" id="UPA00143"/>
<dbReference type="Proteomes" id="UP000000763">
    <property type="component" value="Chromosome 3"/>
</dbReference>
<dbReference type="Proteomes" id="UP000059680">
    <property type="component" value="Chromosome 3"/>
</dbReference>
<dbReference type="GO" id="GO:0016020">
    <property type="term" value="C:membrane"/>
    <property type="evidence" value="ECO:0007669"/>
    <property type="project" value="UniProtKB-SubCell"/>
</dbReference>
<dbReference type="GO" id="GO:0004842">
    <property type="term" value="F:ubiquitin-protein transferase activity"/>
    <property type="evidence" value="ECO:0000314"/>
    <property type="project" value="UniProtKB"/>
</dbReference>
<dbReference type="GO" id="GO:0008270">
    <property type="term" value="F:zinc ion binding"/>
    <property type="evidence" value="ECO:0007669"/>
    <property type="project" value="UniProtKB-KW"/>
</dbReference>
<dbReference type="GO" id="GO:0016567">
    <property type="term" value="P:protein ubiquitination"/>
    <property type="evidence" value="ECO:0000314"/>
    <property type="project" value="UniProtKB"/>
</dbReference>
<dbReference type="CDD" id="cd16461">
    <property type="entry name" value="RING-H2_EL5-like"/>
    <property type="match status" value="1"/>
</dbReference>
<dbReference type="FunFam" id="3.30.40.10:FF:000187">
    <property type="entry name" value="E3 ubiquitin-protein ligase ATL6"/>
    <property type="match status" value="1"/>
</dbReference>
<dbReference type="Gene3D" id="3.30.40.10">
    <property type="entry name" value="Zinc/RING finger domain, C3HC4 (zinc finger)"/>
    <property type="match status" value="1"/>
</dbReference>
<dbReference type="InterPro" id="IPR044600">
    <property type="entry name" value="ATL1/ATL16-like"/>
</dbReference>
<dbReference type="InterPro" id="IPR001841">
    <property type="entry name" value="Znf_RING"/>
</dbReference>
<dbReference type="InterPro" id="IPR013083">
    <property type="entry name" value="Znf_RING/FYVE/PHD"/>
</dbReference>
<dbReference type="PANTHER" id="PTHR46913">
    <property type="entry name" value="RING-H2 FINGER PROTEIN ATL16"/>
    <property type="match status" value="1"/>
</dbReference>
<dbReference type="PANTHER" id="PTHR46913:SF1">
    <property type="entry name" value="RING-H2 FINGER PROTEIN ATL16"/>
    <property type="match status" value="1"/>
</dbReference>
<dbReference type="Pfam" id="PF13639">
    <property type="entry name" value="zf-RING_2"/>
    <property type="match status" value="1"/>
</dbReference>
<dbReference type="SMART" id="SM00184">
    <property type="entry name" value="RING"/>
    <property type="match status" value="1"/>
</dbReference>
<dbReference type="SUPFAM" id="SSF57850">
    <property type="entry name" value="RING/U-box"/>
    <property type="match status" value="1"/>
</dbReference>
<dbReference type="PROSITE" id="PS50089">
    <property type="entry name" value="ZF_RING_2"/>
    <property type="match status" value="1"/>
</dbReference>
<proteinExistence type="evidence at transcript level"/>
<keyword id="KW-0472">Membrane</keyword>
<keyword id="KW-0479">Metal-binding</keyword>
<keyword id="KW-1185">Reference proteome</keyword>
<keyword id="KW-0808">Transferase</keyword>
<keyword id="KW-0812">Transmembrane</keyword>
<keyword id="KW-1133">Transmembrane helix</keyword>
<keyword id="KW-0833">Ubl conjugation pathway</keyword>
<keyword id="KW-0862">Zinc</keyword>
<keyword id="KW-0863">Zinc-finger</keyword>
<organism>
    <name type="scientific">Oryza sativa subsp. japonica</name>
    <name type="common">Rice</name>
    <dbReference type="NCBI Taxonomy" id="39947"/>
    <lineage>
        <taxon>Eukaryota</taxon>
        <taxon>Viridiplantae</taxon>
        <taxon>Streptophyta</taxon>
        <taxon>Embryophyta</taxon>
        <taxon>Tracheophyta</taxon>
        <taxon>Spermatophyta</taxon>
        <taxon>Magnoliopsida</taxon>
        <taxon>Liliopsida</taxon>
        <taxon>Poales</taxon>
        <taxon>Poaceae</taxon>
        <taxon>BOP clade</taxon>
        <taxon>Oryzoideae</taxon>
        <taxon>Oryzeae</taxon>
        <taxon>Oryzinae</taxon>
        <taxon>Oryza</taxon>
        <taxon>Oryza sativa</taxon>
    </lineage>
</organism>
<protein>
    <recommendedName>
        <fullName>E3 ubiquitin-protein ligase Os03g0188200</fullName>
        <ecNumber evidence="1">2.3.2.27</ecNumber>
    </recommendedName>
    <alternativeName>
        <fullName>RING-H2 finger protein Os03g0188200</fullName>
    </alternativeName>
    <alternativeName>
        <fullName evidence="6">RING-type E3 ubiquitin transferase Os03g0188200</fullName>
    </alternativeName>
</protein>
<sequence>MAHRRIALAVLVTLLLSAFRPCLAQQSNDDTSKHHRSATAGGFTPTTVVVLVALITAFVLLTVFSVLINRCAQARAPPRRAFRSTASHQPVGGAAAASRASRGLDKEVVEAFPTAVYGDVKARMAAKSGPLECAVCLAEFADSDELRVLPACCHVFHPDCIDPWLAAAVTCPLCRANLTAPPVSLAAAESSDLTAPEEAVQEEESEELDEASLMATFTPESVIDFGATHDHEFDRAGYPHYRRTQSAMDAAPDRHTLRLPEHVMKELAADRRHRRAASLAGYPDSVERTPRWLTSLWRSVSWQRQSRADWDAGEEHGGSKRVHPVAGAQDETPSGSGSDGSKENSDSDALNRV</sequence>
<accession>Q8H7N9</accession>
<accession>A0A0P0VTZ8</accession>
<gene>
    <name type="ordered locus">Os03g0188200</name>
    <name type="ordered locus">LOC_Os03g08920</name>
    <name type="ORF">OJ1217B09.7</name>
</gene>
<comment type="function">
    <text evidence="5">Possesses E3 ubiquitin-protein ligase in vitro.</text>
</comment>
<comment type="catalytic activity">
    <reaction evidence="1">
        <text>S-ubiquitinyl-[E2 ubiquitin-conjugating enzyme]-L-cysteine + [acceptor protein]-L-lysine = [E2 ubiquitin-conjugating enzyme]-L-cysteine + N(6)-ubiquitinyl-[acceptor protein]-L-lysine.</text>
        <dbReference type="EC" id="2.3.2.27"/>
    </reaction>
</comment>
<comment type="pathway">
    <text>Protein modification; protein ubiquitination.</text>
</comment>
<comment type="subcellular location">
    <subcellularLocation>
        <location evidence="6">Membrane</location>
        <topology evidence="6">Single-pass membrane protein</topology>
    </subcellularLocation>
</comment>
<feature type="chain" id="PRO_0000397686" description="E3 ubiquitin-protein ligase Os03g0188200">
    <location>
        <begin position="1"/>
        <end position="353"/>
    </location>
</feature>
<feature type="transmembrane region" description="Helical" evidence="2">
    <location>
        <begin position="48"/>
        <end position="68"/>
    </location>
</feature>
<feature type="zinc finger region" description="RING-type; atypical" evidence="3">
    <location>
        <begin position="133"/>
        <end position="175"/>
    </location>
</feature>
<feature type="region of interest" description="Disordered" evidence="4">
    <location>
        <begin position="308"/>
        <end position="353"/>
    </location>
</feature>
<feature type="compositionally biased region" description="Basic and acidic residues" evidence="4">
    <location>
        <begin position="308"/>
        <end position="318"/>
    </location>
</feature>
<feature type="compositionally biased region" description="Basic and acidic residues" evidence="4">
    <location>
        <begin position="340"/>
        <end position="353"/>
    </location>
</feature>
<name>ATL31_ORYSJ</name>
<evidence type="ECO:0000250" key="1">
    <source>
        <dbReference type="UniProtKB" id="Q8LGA5"/>
    </source>
</evidence>
<evidence type="ECO:0000255" key="2"/>
<evidence type="ECO:0000255" key="3">
    <source>
        <dbReference type="PROSITE-ProRule" id="PRU00175"/>
    </source>
</evidence>
<evidence type="ECO:0000256" key="4">
    <source>
        <dbReference type="SAM" id="MobiDB-lite"/>
    </source>
</evidence>
<evidence type="ECO:0000269" key="5">
    <source>
    </source>
</evidence>
<evidence type="ECO:0000305" key="6"/>